<sequence length="344" mass="37503">MNCLMFFKMLLAFSFISLFYVGNAQQSYGNSTVSALFAFGDSILDTGNNNLLLSVSKVNFYPYGRDFIGGRATGRFGNGRVFSDIIAEGLGLKNLLPAYRDPYLWNNDLTTGVCFASGGSGLDPITARTTGSIWVSDQVTDFQNYITRLNGVVGNQEQANAVISNAVYLISAGNNDIAITYFTTGARRLQYTLPAYNDQLVSWTRDLIKSLYDMGARKFAVMGTLPLGCLPGARALTRACELFVNQGAAMFNQQLSADIDNLGATFPGAKFVYVDMYNPLLGLIINPQASGFIDVADACCCTPTHLIPCLDASRYVFWDVAHPTQKSYETIAPQIIENIKAKLA</sequence>
<accession>Q9C9V0</accession>
<keyword id="KW-0325">Glycoprotein</keyword>
<keyword id="KW-0378">Hydrolase</keyword>
<keyword id="KW-0442">Lipid degradation</keyword>
<keyword id="KW-0443">Lipid metabolism</keyword>
<keyword id="KW-1185">Reference proteome</keyword>
<keyword id="KW-0964">Secreted</keyword>
<keyword id="KW-0732">Signal</keyword>
<gene>
    <name type="ordered locus">At1g73610</name>
    <name type="ORF">F25P22.2</name>
</gene>
<comment type="subcellular location">
    <subcellularLocation>
        <location evidence="3">Secreted</location>
    </subcellularLocation>
</comment>
<comment type="similarity">
    <text evidence="3">Belongs to the 'GDSL' lipolytic enzyme family.</text>
</comment>
<proteinExistence type="evidence at transcript level"/>
<name>GDL30_ARATH</name>
<protein>
    <recommendedName>
        <fullName>GDSL esterase/lipase At1g73610</fullName>
        <ecNumber>3.1.1.-</ecNumber>
    </recommendedName>
    <alternativeName>
        <fullName>Extracellular lipase At1g73610</fullName>
    </alternativeName>
</protein>
<organism>
    <name type="scientific">Arabidopsis thaliana</name>
    <name type="common">Mouse-ear cress</name>
    <dbReference type="NCBI Taxonomy" id="3702"/>
    <lineage>
        <taxon>Eukaryota</taxon>
        <taxon>Viridiplantae</taxon>
        <taxon>Streptophyta</taxon>
        <taxon>Embryophyta</taxon>
        <taxon>Tracheophyta</taxon>
        <taxon>Spermatophyta</taxon>
        <taxon>Magnoliopsida</taxon>
        <taxon>eudicotyledons</taxon>
        <taxon>Gunneridae</taxon>
        <taxon>Pentapetalae</taxon>
        <taxon>rosids</taxon>
        <taxon>malvids</taxon>
        <taxon>Brassicales</taxon>
        <taxon>Brassicaceae</taxon>
        <taxon>Camelineae</taxon>
        <taxon>Arabidopsis</taxon>
    </lineage>
</organism>
<reference key="1">
    <citation type="journal article" date="2000" name="Nature">
        <title>Sequence and analysis of chromosome 1 of the plant Arabidopsis thaliana.</title>
        <authorList>
            <person name="Theologis A."/>
            <person name="Ecker J.R."/>
            <person name="Palm C.J."/>
            <person name="Federspiel N.A."/>
            <person name="Kaul S."/>
            <person name="White O."/>
            <person name="Alonso J."/>
            <person name="Altafi H."/>
            <person name="Araujo R."/>
            <person name="Bowman C.L."/>
            <person name="Brooks S.Y."/>
            <person name="Buehler E."/>
            <person name="Chan A."/>
            <person name="Chao Q."/>
            <person name="Chen H."/>
            <person name="Cheuk R.F."/>
            <person name="Chin C.W."/>
            <person name="Chung M.K."/>
            <person name="Conn L."/>
            <person name="Conway A.B."/>
            <person name="Conway A.R."/>
            <person name="Creasy T.H."/>
            <person name="Dewar K."/>
            <person name="Dunn P."/>
            <person name="Etgu P."/>
            <person name="Feldblyum T.V."/>
            <person name="Feng J.-D."/>
            <person name="Fong B."/>
            <person name="Fujii C.Y."/>
            <person name="Gill J.E."/>
            <person name="Goldsmith A.D."/>
            <person name="Haas B."/>
            <person name="Hansen N.F."/>
            <person name="Hughes B."/>
            <person name="Huizar L."/>
            <person name="Hunter J.L."/>
            <person name="Jenkins J."/>
            <person name="Johnson-Hopson C."/>
            <person name="Khan S."/>
            <person name="Khaykin E."/>
            <person name="Kim C.J."/>
            <person name="Koo H.L."/>
            <person name="Kremenetskaia I."/>
            <person name="Kurtz D.B."/>
            <person name="Kwan A."/>
            <person name="Lam B."/>
            <person name="Langin-Hooper S."/>
            <person name="Lee A."/>
            <person name="Lee J.M."/>
            <person name="Lenz C.A."/>
            <person name="Li J.H."/>
            <person name="Li Y.-P."/>
            <person name="Lin X."/>
            <person name="Liu S.X."/>
            <person name="Liu Z.A."/>
            <person name="Luros J.S."/>
            <person name="Maiti R."/>
            <person name="Marziali A."/>
            <person name="Militscher J."/>
            <person name="Miranda M."/>
            <person name="Nguyen M."/>
            <person name="Nierman W.C."/>
            <person name="Osborne B.I."/>
            <person name="Pai G."/>
            <person name="Peterson J."/>
            <person name="Pham P.K."/>
            <person name="Rizzo M."/>
            <person name="Rooney T."/>
            <person name="Rowley D."/>
            <person name="Sakano H."/>
            <person name="Salzberg S.L."/>
            <person name="Schwartz J.R."/>
            <person name="Shinn P."/>
            <person name="Southwick A.M."/>
            <person name="Sun H."/>
            <person name="Tallon L.J."/>
            <person name="Tambunga G."/>
            <person name="Toriumi M.J."/>
            <person name="Town C.D."/>
            <person name="Utterback T."/>
            <person name="Van Aken S."/>
            <person name="Vaysberg M."/>
            <person name="Vysotskaia V.S."/>
            <person name="Walker M."/>
            <person name="Wu D."/>
            <person name="Yu G."/>
            <person name="Fraser C.M."/>
            <person name="Venter J.C."/>
            <person name="Davis R.W."/>
        </authorList>
    </citation>
    <scope>NUCLEOTIDE SEQUENCE [LARGE SCALE GENOMIC DNA]</scope>
    <source>
        <strain>cv. Columbia</strain>
    </source>
</reference>
<reference key="2">
    <citation type="journal article" date="2017" name="Plant J.">
        <title>Araport11: a complete reannotation of the Arabidopsis thaliana reference genome.</title>
        <authorList>
            <person name="Cheng C.Y."/>
            <person name="Krishnakumar V."/>
            <person name="Chan A.P."/>
            <person name="Thibaud-Nissen F."/>
            <person name="Schobel S."/>
            <person name="Town C.D."/>
        </authorList>
    </citation>
    <scope>GENOME REANNOTATION</scope>
    <source>
        <strain>cv. Columbia</strain>
    </source>
</reference>
<reference key="3">
    <citation type="journal article" date="2004" name="Prog. Lipid Res.">
        <title>GDSL family of serine esterases/lipases.</title>
        <authorList>
            <person name="Akoh C.C."/>
            <person name="Lee G.-C."/>
            <person name="Liaw Y.-C."/>
            <person name="Huang T.-H."/>
            <person name="Shaw J.-F."/>
        </authorList>
    </citation>
    <scope>REVIEW</scope>
</reference>
<reference key="4">
    <citation type="journal article" date="2008" name="Pak. J. Biol. Sci.">
        <title>Sequence analysis of GDSL lipase gene family in Arabidopsis thaliana.</title>
        <authorList>
            <person name="Ling H."/>
        </authorList>
    </citation>
    <scope>GENE FAMILY</scope>
</reference>
<feature type="signal peptide" evidence="2">
    <location>
        <begin position="1"/>
        <end position="24"/>
    </location>
</feature>
<feature type="chain" id="PRO_0000367371" description="GDSL esterase/lipase At1g73610">
    <location>
        <begin position="25"/>
        <end position="344"/>
    </location>
</feature>
<feature type="active site" description="Nucleophile" evidence="1">
    <location>
        <position position="42"/>
    </location>
</feature>
<feature type="active site" evidence="1">
    <location>
        <position position="319"/>
    </location>
</feature>
<feature type="active site" evidence="1">
    <location>
        <position position="322"/>
    </location>
</feature>
<feature type="glycosylation site" description="N-linked (GlcNAc...) asparagine" evidence="2">
    <location>
        <position position="30"/>
    </location>
</feature>
<evidence type="ECO:0000250" key="1"/>
<evidence type="ECO:0000255" key="2"/>
<evidence type="ECO:0000305" key="3"/>
<dbReference type="EC" id="3.1.1.-"/>
<dbReference type="EMBL" id="AC012679">
    <property type="protein sequence ID" value="AAG52082.1"/>
    <property type="molecule type" value="Genomic_DNA"/>
</dbReference>
<dbReference type="EMBL" id="CP002684">
    <property type="protein sequence ID" value="AEE35485.1"/>
    <property type="molecule type" value="Genomic_DNA"/>
</dbReference>
<dbReference type="PIR" id="A96763">
    <property type="entry name" value="A96763"/>
</dbReference>
<dbReference type="RefSeq" id="NP_177502.1">
    <property type="nucleotide sequence ID" value="NM_106019.2"/>
</dbReference>
<dbReference type="SMR" id="Q9C9V0"/>
<dbReference type="FunCoup" id="Q9C9V0">
    <property type="interactions" value="96"/>
</dbReference>
<dbReference type="GlyGen" id="Q9C9V0">
    <property type="glycosylation" value="1 site"/>
</dbReference>
<dbReference type="PaxDb" id="3702-AT1G73610.1"/>
<dbReference type="ProteomicsDB" id="224753"/>
<dbReference type="EnsemblPlants" id="AT1G73610.1">
    <property type="protein sequence ID" value="AT1G73610.1"/>
    <property type="gene ID" value="AT1G73610"/>
</dbReference>
<dbReference type="GeneID" id="843695"/>
<dbReference type="Gramene" id="AT1G73610.1">
    <property type="protein sequence ID" value="AT1G73610.1"/>
    <property type="gene ID" value="AT1G73610"/>
</dbReference>
<dbReference type="KEGG" id="ath:AT1G73610"/>
<dbReference type="Araport" id="AT1G73610"/>
<dbReference type="TAIR" id="AT1G73610"/>
<dbReference type="eggNOG" id="ENOG502R6GS">
    <property type="taxonomic scope" value="Eukaryota"/>
</dbReference>
<dbReference type="HOGENOM" id="CLU_015101_0_1_1"/>
<dbReference type="InParanoid" id="Q9C9V0"/>
<dbReference type="OMA" id="TFPGAKF"/>
<dbReference type="PhylomeDB" id="Q9C9V0"/>
<dbReference type="BioCyc" id="ARA:AT1G73610-MONOMER"/>
<dbReference type="PRO" id="PR:Q9C9V0"/>
<dbReference type="Proteomes" id="UP000006548">
    <property type="component" value="Chromosome 1"/>
</dbReference>
<dbReference type="ExpressionAtlas" id="Q9C9V0">
    <property type="expression patterns" value="baseline and differential"/>
</dbReference>
<dbReference type="GO" id="GO:0005576">
    <property type="term" value="C:extracellular region"/>
    <property type="evidence" value="ECO:0007669"/>
    <property type="project" value="UniProtKB-SubCell"/>
</dbReference>
<dbReference type="GO" id="GO:0016298">
    <property type="term" value="F:lipase activity"/>
    <property type="evidence" value="ECO:0007669"/>
    <property type="project" value="InterPro"/>
</dbReference>
<dbReference type="GO" id="GO:0016042">
    <property type="term" value="P:lipid catabolic process"/>
    <property type="evidence" value="ECO:0007669"/>
    <property type="project" value="UniProtKB-KW"/>
</dbReference>
<dbReference type="CDD" id="cd01837">
    <property type="entry name" value="SGNH_plant_lipase_like"/>
    <property type="match status" value="1"/>
</dbReference>
<dbReference type="FunFam" id="3.40.50.1110:FF:000003">
    <property type="entry name" value="GDSL esterase/lipase APG"/>
    <property type="match status" value="1"/>
</dbReference>
<dbReference type="Gene3D" id="3.40.50.1110">
    <property type="entry name" value="SGNH hydrolase"/>
    <property type="match status" value="1"/>
</dbReference>
<dbReference type="InterPro" id="IPR001087">
    <property type="entry name" value="GDSL"/>
</dbReference>
<dbReference type="InterPro" id="IPR050592">
    <property type="entry name" value="GDSL_lipolytic_enzyme"/>
</dbReference>
<dbReference type="InterPro" id="IPR008265">
    <property type="entry name" value="Lipase_GDSL_AS"/>
</dbReference>
<dbReference type="InterPro" id="IPR036514">
    <property type="entry name" value="SGNH_hydro_sf"/>
</dbReference>
<dbReference type="InterPro" id="IPR035669">
    <property type="entry name" value="SGNH_plant_lipase-like"/>
</dbReference>
<dbReference type="PANTHER" id="PTHR45642">
    <property type="entry name" value="GDSL ESTERASE/LIPASE EXL3"/>
    <property type="match status" value="1"/>
</dbReference>
<dbReference type="PANTHER" id="PTHR45642:SF52">
    <property type="entry name" value="GDSL-LIKE LIPASE_ACYLHYDROLASE"/>
    <property type="match status" value="1"/>
</dbReference>
<dbReference type="Pfam" id="PF00657">
    <property type="entry name" value="Lipase_GDSL"/>
    <property type="match status" value="1"/>
</dbReference>
<dbReference type="SUPFAM" id="SSF52266">
    <property type="entry name" value="SGNH hydrolase"/>
    <property type="match status" value="1"/>
</dbReference>
<dbReference type="PROSITE" id="PS01098">
    <property type="entry name" value="LIPASE_GDSL_SER"/>
    <property type="match status" value="1"/>
</dbReference>